<gene>
    <name evidence="1" type="primary">rpmG</name>
    <name type="ordered locus">Pcar_0687</name>
</gene>
<feature type="chain" id="PRO_0000356605" description="Large ribosomal subunit protein bL33">
    <location>
        <begin position="1"/>
        <end position="49"/>
    </location>
</feature>
<evidence type="ECO:0000255" key="1">
    <source>
        <dbReference type="HAMAP-Rule" id="MF_00294"/>
    </source>
</evidence>
<evidence type="ECO:0000305" key="2"/>
<reference key="1">
    <citation type="submission" date="2005-10" db="EMBL/GenBank/DDBJ databases">
        <title>Complete sequence of Pelobacter carbinolicus DSM 2380.</title>
        <authorList>
            <person name="Copeland A."/>
            <person name="Lucas S."/>
            <person name="Lapidus A."/>
            <person name="Barry K."/>
            <person name="Detter J.C."/>
            <person name="Glavina T."/>
            <person name="Hammon N."/>
            <person name="Israni S."/>
            <person name="Pitluck S."/>
            <person name="Chertkov O."/>
            <person name="Schmutz J."/>
            <person name="Larimer F."/>
            <person name="Land M."/>
            <person name="Kyrpides N."/>
            <person name="Ivanova N."/>
            <person name="Richardson P."/>
        </authorList>
    </citation>
    <scope>NUCLEOTIDE SEQUENCE [LARGE SCALE GENOMIC DNA]</scope>
    <source>
        <strain>DSM 2380 / NBRC 103641 / GraBd1</strain>
    </source>
</reference>
<organism>
    <name type="scientific">Syntrophotalea carbinolica (strain DSM 2380 / NBRC 103641 / GraBd1)</name>
    <name type="common">Pelobacter carbinolicus</name>
    <dbReference type="NCBI Taxonomy" id="338963"/>
    <lineage>
        <taxon>Bacteria</taxon>
        <taxon>Pseudomonadati</taxon>
        <taxon>Thermodesulfobacteriota</taxon>
        <taxon>Desulfuromonadia</taxon>
        <taxon>Desulfuromonadales</taxon>
        <taxon>Syntrophotaleaceae</taxon>
        <taxon>Syntrophotalea</taxon>
    </lineage>
</organism>
<protein>
    <recommendedName>
        <fullName evidence="1">Large ribosomal subunit protein bL33</fullName>
    </recommendedName>
    <alternativeName>
        <fullName evidence="2">50S ribosomal protein L33</fullName>
    </alternativeName>
</protein>
<sequence>MADIITLACTECKQRNYTTTKNKKTKPERLEFNKYCRFCRKHTPHRETK</sequence>
<proteinExistence type="inferred from homology"/>
<dbReference type="EMBL" id="CP000142">
    <property type="protein sequence ID" value="ABA87946.2"/>
    <property type="molecule type" value="Genomic_DNA"/>
</dbReference>
<dbReference type="RefSeq" id="WP_011340389.1">
    <property type="nucleotide sequence ID" value="NC_007498.2"/>
</dbReference>
<dbReference type="SMR" id="Q3A6R1"/>
<dbReference type="STRING" id="338963.Pcar_0687"/>
<dbReference type="KEGG" id="pca:Pcar_0687"/>
<dbReference type="eggNOG" id="COG0267">
    <property type="taxonomic scope" value="Bacteria"/>
</dbReference>
<dbReference type="HOGENOM" id="CLU_190949_0_2_7"/>
<dbReference type="Proteomes" id="UP000002534">
    <property type="component" value="Chromosome"/>
</dbReference>
<dbReference type="GO" id="GO:0005737">
    <property type="term" value="C:cytoplasm"/>
    <property type="evidence" value="ECO:0007669"/>
    <property type="project" value="UniProtKB-ARBA"/>
</dbReference>
<dbReference type="GO" id="GO:1990904">
    <property type="term" value="C:ribonucleoprotein complex"/>
    <property type="evidence" value="ECO:0007669"/>
    <property type="project" value="UniProtKB-KW"/>
</dbReference>
<dbReference type="GO" id="GO:0005840">
    <property type="term" value="C:ribosome"/>
    <property type="evidence" value="ECO:0007669"/>
    <property type="project" value="UniProtKB-KW"/>
</dbReference>
<dbReference type="GO" id="GO:0003735">
    <property type="term" value="F:structural constituent of ribosome"/>
    <property type="evidence" value="ECO:0007669"/>
    <property type="project" value="InterPro"/>
</dbReference>
<dbReference type="GO" id="GO:0006412">
    <property type="term" value="P:translation"/>
    <property type="evidence" value="ECO:0007669"/>
    <property type="project" value="UniProtKB-UniRule"/>
</dbReference>
<dbReference type="Gene3D" id="2.20.28.120">
    <property type="entry name" value="Ribosomal protein L33"/>
    <property type="match status" value="1"/>
</dbReference>
<dbReference type="HAMAP" id="MF_00294">
    <property type="entry name" value="Ribosomal_bL33"/>
    <property type="match status" value="1"/>
</dbReference>
<dbReference type="InterPro" id="IPR001705">
    <property type="entry name" value="Ribosomal_bL33"/>
</dbReference>
<dbReference type="InterPro" id="IPR018264">
    <property type="entry name" value="Ribosomal_bL33_CS"/>
</dbReference>
<dbReference type="InterPro" id="IPR038584">
    <property type="entry name" value="Ribosomal_bL33_sf"/>
</dbReference>
<dbReference type="InterPro" id="IPR011332">
    <property type="entry name" value="Ribosomal_zn-bd"/>
</dbReference>
<dbReference type="NCBIfam" id="NF001764">
    <property type="entry name" value="PRK00504.1"/>
    <property type="match status" value="1"/>
</dbReference>
<dbReference type="NCBIfam" id="NF001860">
    <property type="entry name" value="PRK00595.1"/>
    <property type="match status" value="1"/>
</dbReference>
<dbReference type="NCBIfam" id="TIGR01023">
    <property type="entry name" value="rpmG_bact"/>
    <property type="match status" value="1"/>
</dbReference>
<dbReference type="PANTHER" id="PTHR43168">
    <property type="entry name" value="50S RIBOSOMAL PROTEIN L33, CHLOROPLASTIC"/>
    <property type="match status" value="1"/>
</dbReference>
<dbReference type="PANTHER" id="PTHR43168:SF2">
    <property type="entry name" value="LARGE RIBOSOMAL SUBUNIT PROTEIN BL33C"/>
    <property type="match status" value="1"/>
</dbReference>
<dbReference type="Pfam" id="PF00471">
    <property type="entry name" value="Ribosomal_L33"/>
    <property type="match status" value="1"/>
</dbReference>
<dbReference type="SUPFAM" id="SSF57829">
    <property type="entry name" value="Zn-binding ribosomal proteins"/>
    <property type="match status" value="1"/>
</dbReference>
<dbReference type="PROSITE" id="PS00582">
    <property type="entry name" value="RIBOSOMAL_L33"/>
    <property type="match status" value="1"/>
</dbReference>
<name>RL33_SYNC1</name>
<keyword id="KW-1185">Reference proteome</keyword>
<keyword id="KW-0687">Ribonucleoprotein</keyword>
<keyword id="KW-0689">Ribosomal protein</keyword>
<accession>Q3A6R1</accession>
<comment type="similarity">
    <text evidence="1">Belongs to the bacterial ribosomal protein bL33 family.</text>
</comment>